<sequence length="218" mass="24393">MSQTAMSETYDFLFKFLVIGNAGTGKSCLLHQFIEKKFKDDSNHTIGVEFGSKIINVGGKYVKLQIWDTAGQERFRSVTRSYYRGAAGALLVYDITSRETYNALTNWLTDARMLASQNIVIILCGNKKDLDTDREVTFLEASRFAQENELMFLETSALTGENVEEAFVQCARKILNKIESGELDPERMGSGIQYGDAALRQLRSPRRAQAPSAQECGC</sequence>
<protein>
    <recommendedName>
        <fullName>Ras-related protein Rab-4A</fullName>
        <ecNumber evidence="3">3.6.5.2</ecNumber>
    </recommendedName>
</protein>
<evidence type="ECO:0000250" key="1"/>
<evidence type="ECO:0000250" key="2">
    <source>
        <dbReference type="UniProtKB" id="P05714"/>
    </source>
</evidence>
<evidence type="ECO:0000250" key="3">
    <source>
        <dbReference type="UniProtKB" id="P20338"/>
    </source>
</evidence>
<evidence type="ECO:0000250" key="4">
    <source>
        <dbReference type="UniProtKB" id="P56371"/>
    </source>
</evidence>
<evidence type="ECO:0000250" key="5">
    <source>
        <dbReference type="UniProtKB" id="P61018"/>
    </source>
</evidence>
<evidence type="ECO:0000250" key="6">
    <source>
        <dbReference type="UniProtKB" id="P61106"/>
    </source>
</evidence>
<evidence type="ECO:0000305" key="7"/>
<gene>
    <name type="primary">RAB4A</name>
</gene>
<reference key="1">
    <citation type="submission" date="2005-11" db="EMBL/GenBank/DDBJ databases">
        <authorList>
            <consortium name="NIH - Mammalian Gene Collection (MGC) project"/>
        </authorList>
    </citation>
    <scope>NUCLEOTIDE SEQUENCE [LARGE SCALE MRNA]</scope>
    <source>
        <strain>Crossbred X Angus</strain>
        <tissue>Liver</tissue>
    </source>
</reference>
<keyword id="KW-0963">Cytoplasm</keyword>
<keyword id="KW-0967">Endosome</keyword>
<keyword id="KW-0342">GTP-binding</keyword>
<keyword id="KW-0378">Hydrolase</keyword>
<keyword id="KW-0449">Lipoprotein</keyword>
<keyword id="KW-0460">Magnesium</keyword>
<keyword id="KW-0472">Membrane</keyword>
<keyword id="KW-0479">Metal-binding</keyword>
<keyword id="KW-0488">Methylation</keyword>
<keyword id="KW-0547">Nucleotide-binding</keyword>
<keyword id="KW-0597">Phosphoprotein</keyword>
<keyword id="KW-0636">Prenylation</keyword>
<keyword id="KW-0653">Protein transport</keyword>
<keyword id="KW-1185">Reference proteome</keyword>
<keyword id="KW-0813">Transport</keyword>
<feature type="chain" id="PRO_0000226290" description="Ras-related protein Rab-4A">
    <location>
        <begin position="1"/>
        <end position="218"/>
    </location>
</feature>
<feature type="short sequence motif" description="Switch 1" evidence="6">
    <location>
        <begin position="44"/>
        <end position="49"/>
    </location>
</feature>
<feature type="short sequence motif" description="Switch 2" evidence="6">
    <location>
        <begin position="70"/>
        <end position="79"/>
    </location>
</feature>
<feature type="binding site" evidence="3">
    <location>
        <position position="23"/>
    </location>
    <ligand>
        <name>GTP</name>
        <dbReference type="ChEBI" id="CHEBI:37565"/>
    </ligand>
</feature>
<feature type="binding site" evidence="3">
    <location>
        <position position="24"/>
    </location>
    <ligand>
        <name>GTP</name>
        <dbReference type="ChEBI" id="CHEBI:37565"/>
    </ligand>
</feature>
<feature type="binding site" evidence="3">
    <location>
        <position position="25"/>
    </location>
    <ligand>
        <name>GTP</name>
        <dbReference type="ChEBI" id="CHEBI:37565"/>
    </ligand>
</feature>
<feature type="binding site" evidence="3">
    <location>
        <position position="26"/>
    </location>
    <ligand>
        <name>GTP</name>
        <dbReference type="ChEBI" id="CHEBI:37565"/>
    </ligand>
</feature>
<feature type="binding site" evidence="3">
    <location>
        <position position="27"/>
    </location>
    <ligand>
        <name>GTP</name>
        <dbReference type="ChEBI" id="CHEBI:37565"/>
    </ligand>
</feature>
<feature type="binding site" evidence="3">
    <location>
        <position position="27"/>
    </location>
    <ligand>
        <name>Mg(2+)</name>
        <dbReference type="ChEBI" id="CHEBI:18420"/>
    </ligand>
</feature>
<feature type="binding site" evidence="3">
    <location>
        <position position="28"/>
    </location>
    <ligand>
        <name>GTP</name>
        <dbReference type="ChEBI" id="CHEBI:37565"/>
    </ligand>
</feature>
<feature type="binding site" evidence="3">
    <location>
        <position position="42"/>
    </location>
    <ligand>
        <name>GTP</name>
        <dbReference type="ChEBI" id="CHEBI:37565"/>
    </ligand>
</feature>
<feature type="binding site" evidence="3">
    <location>
        <position position="44"/>
    </location>
    <ligand>
        <name>GTP</name>
        <dbReference type="ChEBI" id="CHEBI:37565"/>
    </ligand>
</feature>
<feature type="binding site" evidence="3">
    <location>
        <position position="45"/>
    </location>
    <ligand>
        <name>GTP</name>
        <dbReference type="ChEBI" id="CHEBI:37565"/>
    </ligand>
</feature>
<feature type="binding site" evidence="3">
    <location>
        <position position="45"/>
    </location>
    <ligand>
        <name>Mg(2+)</name>
        <dbReference type="ChEBI" id="CHEBI:18420"/>
    </ligand>
</feature>
<feature type="binding site" evidence="5">
    <location>
        <position position="68"/>
    </location>
    <ligand>
        <name>Mg(2+)</name>
        <dbReference type="ChEBI" id="CHEBI:18420"/>
    </ligand>
</feature>
<feature type="binding site" evidence="3">
    <location>
        <position position="71"/>
    </location>
    <ligand>
        <name>GTP</name>
        <dbReference type="ChEBI" id="CHEBI:37565"/>
    </ligand>
</feature>
<feature type="binding site" evidence="3">
    <location>
        <position position="126"/>
    </location>
    <ligand>
        <name>GTP</name>
        <dbReference type="ChEBI" id="CHEBI:37565"/>
    </ligand>
</feature>
<feature type="binding site" evidence="3">
    <location>
        <position position="127"/>
    </location>
    <ligand>
        <name>GTP</name>
        <dbReference type="ChEBI" id="CHEBI:37565"/>
    </ligand>
</feature>
<feature type="binding site" evidence="3">
    <location>
        <position position="129"/>
    </location>
    <ligand>
        <name>GTP</name>
        <dbReference type="ChEBI" id="CHEBI:37565"/>
    </ligand>
</feature>
<feature type="binding site" evidence="3">
    <location>
        <position position="157"/>
    </location>
    <ligand>
        <name>GTP</name>
        <dbReference type="ChEBI" id="CHEBI:37565"/>
    </ligand>
</feature>
<feature type="binding site" evidence="3">
    <location>
        <position position="158"/>
    </location>
    <ligand>
        <name>GTP</name>
        <dbReference type="ChEBI" id="CHEBI:37565"/>
    </ligand>
</feature>
<feature type="modified residue" description="5-glutamyl serotonin" evidence="4">
    <location>
        <position position="72"/>
    </location>
</feature>
<feature type="modified residue" description="Phosphoserine" evidence="3">
    <location>
        <position position="190"/>
    </location>
</feature>
<feature type="modified residue" description="Phosphoserine; by CDK1" evidence="3">
    <location>
        <position position="204"/>
    </location>
</feature>
<feature type="modified residue" description="Cysteine methyl ester" evidence="1">
    <location>
        <position position="218"/>
    </location>
</feature>
<feature type="lipid moiety-binding region" description="S-geranylgeranyl cysteine" evidence="1">
    <location>
        <position position="216"/>
    </location>
</feature>
<feature type="lipid moiety-binding region" description="S-geranylgeranyl cysteine" evidence="1">
    <location>
        <position position="218"/>
    </location>
</feature>
<name>RAB4A_BOVIN</name>
<organism>
    <name type="scientific">Bos taurus</name>
    <name type="common">Bovine</name>
    <dbReference type="NCBI Taxonomy" id="9913"/>
    <lineage>
        <taxon>Eukaryota</taxon>
        <taxon>Metazoa</taxon>
        <taxon>Chordata</taxon>
        <taxon>Craniata</taxon>
        <taxon>Vertebrata</taxon>
        <taxon>Euteleostomi</taxon>
        <taxon>Mammalia</taxon>
        <taxon>Eutheria</taxon>
        <taxon>Laurasiatheria</taxon>
        <taxon>Artiodactyla</taxon>
        <taxon>Ruminantia</taxon>
        <taxon>Pecora</taxon>
        <taxon>Bovidae</taxon>
        <taxon>Bovinae</taxon>
        <taxon>Bos</taxon>
    </lineage>
</organism>
<dbReference type="EC" id="3.6.5.2" evidence="3"/>
<dbReference type="EMBL" id="BC110198">
    <property type="protein sequence ID" value="AAI10199.1"/>
    <property type="molecule type" value="mRNA"/>
</dbReference>
<dbReference type="RefSeq" id="NP_001033774.1">
    <property type="nucleotide sequence ID" value="NM_001038685.2"/>
</dbReference>
<dbReference type="SMR" id="Q2TBH7"/>
<dbReference type="BioGRID" id="543454">
    <property type="interactions" value="2"/>
</dbReference>
<dbReference type="FunCoup" id="Q2TBH7">
    <property type="interactions" value="2025"/>
</dbReference>
<dbReference type="STRING" id="9913.ENSBTAP00000046611"/>
<dbReference type="PaxDb" id="9913-ENSBTAP00000046611"/>
<dbReference type="Ensembl" id="ENSBTAT00000049768.4">
    <property type="protein sequence ID" value="ENSBTAP00000046611.3"/>
    <property type="gene ID" value="ENSBTAG00000018857.7"/>
</dbReference>
<dbReference type="GeneID" id="615849"/>
<dbReference type="KEGG" id="bta:615849"/>
<dbReference type="CTD" id="5867"/>
<dbReference type="VEuPathDB" id="HostDB:ENSBTAG00000018857"/>
<dbReference type="VGNC" id="VGNC:33657">
    <property type="gene designation" value="RAB4A"/>
</dbReference>
<dbReference type="eggNOG" id="KOG0086">
    <property type="taxonomic scope" value="Eukaryota"/>
</dbReference>
<dbReference type="GeneTree" id="ENSGT00940000157464"/>
<dbReference type="HOGENOM" id="CLU_041217_23_1_1"/>
<dbReference type="InParanoid" id="Q2TBH7"/>
<dbReference type="OMA" id="HEEYALF"/>
<dbReference type="OrthoDB" id="9989112at2759"/>
<dbReference type="TreeFam" id="TF300032"/>
<dbReference type="Reactome" id="R-BTA-1660499">
    <property type="pathway name" value="Synthesis of PIPs at the plasma membrane"/>
</dbReference>
<dbReference type="Reactome" id="R-BTA-8854214">
    <property type="pathway name" value="TBC/RABGAPs"/>
</dbReference>
<dbReference type="Reactome" id="R-BTA-8873719">
    <property type="pathway name" value="RAB geranylgeranylation"/>
</dbReference>
<dbReference type="Reactome" id="R-BTA-8875656">
    <property type="pathway name" value="MET receptor recycling"/>
</dbReference>
<dbReference type="Proteomes" id="UP000009136">
    <property type="component" value="Chromosome 28"/>
</dbReference>
<dbReference type="Bgee" id="ENSBTAG00000018857">
    <property type="expression patterns" value="Expressed in occipital lobe and 101 other cell types or tissues"/>
</dbReference>
<dbReference type="GO" id="GO:0031901">
    <property type="term" value="C:early endosome membrane"/>
    <property type="evidence" value="ECO:0007669"/>
    <property type="project" value="UniProtKB-SubCell"/>
</dbReference>
<dbReference type="GO" id="GO:0032593">
    <property type="term" value="C:insulin-responsive compartment"/>
    <property type="evidence" value="ECO:0000318"/>
    <property type="project" value="GO_Central"/>
</dbReference>
<dbReference type="GO" id="GO:0055037">
    <property type="term" value="C:recycling endosome"/>
    <property type="evidence" value="ECO:0000318"/>
    <property type="project" value="GO_Central"/>
</dbReference>
<dbReference type="GO" id="GO:0055038">
    <property type="term" value="C:recycling endosome membrane"/>
    <property type="evidence" value="ECO:0007669"/>
    <property type="project" value="UniProtKB-SubCell"/>
</dbReference>
<dbReference type="GO" id="GO:0003925">
    <property type="term" value="F:G protein activity"/>
    <property type="evidence" value="ECO:0007669"/>
    <property type="project" value="UniProtKB-EC"/>
</dbReference>
<dbReference type="GO" id="GO:0019003">
    <property type="term" value="F:GDP binding"/>
    <property type="evidence" value="ECO:0000250"/>
    <property type="project" value="UniProtKB"/>
</dbReference>
<dbReference type="GO" id="GO:0005525">
    <property type="term" value="F:GTP binding"/>
    <property type="evidence" value="ECO:0000250"/>
    <property type="project" value="UniProtKB"/>
</dbReference>
<dbReference type="GO" id="GO:0003924">
    <property type="term" value="F:GTPase activity"/>
    <property type="evidence" value="ECO:0000250"/>
    <property type="project" value="UniProtKB"/>
</dbReference>
<dbReference type="GO" id="GO:0015031">
    <property type="term" value="P:protein transport"/>
    <property type="evidence" value="ECO:0007669"/>
    <property type="project" value="UniProtKB-KW"/>
</dbReference>
<dbReference type="GO" id="GO:0032482">
    <property type="term" value="P:Rab protein signal transduction"/>
    <property type="evidence" value="ECO:0007669"/>
    <property type="project" value="InterPro"/>
</dbReference>
<dbReference type="GO" id="GO:0030100">
    <property type="term" value="P:regulation of endocytosis"/>
    <property type="evidence" value="ECO:0000318"/>
    <property type="project" value="GO_Central"/>
</dbReference>
<dbReference type="GO" id="GO:0016192">
    <property type="term" value="P:vesicle-mediated transport"/>
    <property type="evidence" value="ECO:0000318"/>
    <property type="project" value="GO_Central"/>
</dbReference>
<dbReference type="CDD" id="cd04113">
    <property type="entry name" value="Rab4"/>
    <property type="match status" value="1"/>
</dbReference>
<dbReference type="FunFam" id="3.40.50.300:FF:000280">
    <property type="entry name" value="Putative ras-related protein Rab-4B"/>
    <property type="match status" value="1"/>
</dbReference>
<dbReference type="Gene3D" id="3.40.50.300">
    <property type="entry name" value="P-loop containing nucleotide triphosphate hydrolases"/>
    <property type="match status" value="1"/>
</dbReference>
<dbReference type="InterPro" id="IPR027417">
    <property type="entry name" value="P-loop_NTPase"/>
</dbReference>
<dbReference type="InterPro" id="IPR041819">
    <property type="entry name" value="Rab4"/>
</dbReference>
<dbReference type="InterPro" id="IPR050209">
    <property type="entry name" value="Rab_GTPases_membrane_traffic"/>
</dbReference>
<dbReference type="InterPro" id="IPR005225">
    <property type="entry name" value="Small_GTP-bd"/>
</dbReference>
<dbReference type="InterPro" id="IPR001806">
    <property type="entry name" value="Small_GTPase"/>
</dbReference>
<dbReference type="NCBIfam" id="TIGR00231">
    <property type="entry name" value="small_GTP"/>
    <property type="match status" value="1"/>
</dbReference>
<dbReference type="PANTHER" id="PTHR47979">
    <property type="entry name" value="DRAB11-RELATED"/>
    <property type="match status" value="1"/>
</dbReference>
<dbReference type="Pfam" id="PF00071">
    <property type="entry name" value="Ras"/>
    <property type="match status" value="1"/>
</dbReference>
<dbReference type="PRINTS" id="PR00449">
    <property type="entry name" value="RASTRNSFRMNG"/>
</dbReference>
<dbReference type="SMART" id="SM00177">
    <property type="entry name" value="ARF"/>
    <property type="match status" value="1"/>
</dbReference>
<dbReference type="SMART" id="SM00175">
    <property type="entry name" value="RAB"/>
    <property type="match status" value="1"/>
</dbReference>
<dbReference type="SMART" id="SM00176">
    <property type="entry name" value="RAN"/>
    <property type="match status" value="1"/>
</dbReference>
<dbReference type="SMART" id="SM00173">
    <property type="entry name" value="RAS"/>
    <property type="match status" value="1"/>
</dbReference>
<dbReference type="SMART" id="SM00174">
    <property type="entry name" value="RHO"/>
    <property type="match status" value="1"/>
</dbReference>
<dbReference type="SUPFAM" id="SSF52540">
    <property type="entry name" value="P-loop containing nucleoside triphosphate hydrolases"/>
    <property type="match status" value="1"/>
</dbReference>
<dbReference type="PROSITE" id="PS51419">
    <property type="entry name" value="RAB"/>
    <property type="match status" value="1"/>
</dbReference>
<comment type="function">
    <text evidence="3 4">The small GTPases Rab are key regulators of intracellular membrane trafficking, from the formation of transport vesicles to their fusion with membranes. Rabs cycle between an inactive GDP-bound form and an active GTP-bound form that is able to recruit to membranes different sets of downstream effectors directly responsible for vesicle formation, movement, tethering and fusion. RAB4A is involved in protein transport. Also plays a role in vesicular traffic. Mediates VEGFR2 endosomal trafficking to enhance VEGFR2 signaling (By similarity). Acts as a regulator of platelet alpha-granule release during activation and aggregation of platelets (By similarity).</text>
</comment>
<comment type="catalytic activity">
    <reaction evidence="3">
        <text>GTP + H2O = GDP + phosphate + H(+)</text>
        <dbReference type="Rhea" id="RHEA:19669"/>
        <dbReference type="ChEBI" id="CHEBI:15377"/>
        <dbReference type="ChEBI" id="CHEBI:15378"/>
        <dbReference type="ChEBI" id="CHEBI:37565"/>
        <dbReference type="ChEBI" id="CHEBI:43474"/>
        <dbReference type="ChEBI" id="CHEBI:58189"/>
        <dbReference type="EC" id="3.6.5.2"/>
    </reaction>
    <physiologicalReaction direction="left-to-right" evidence="3">
        <dbReference type="Rhea" id="RHEA:19670"/>
    </physiologicalReaction>
</comment>
<comment type="cofactor">
    <cofactor evidence="3">
        <name>Mg(2+)</name>
        <dbReference type="ChEBI" id="CHEBI:18420"/>
    </cofactor>
</comment>
<comment type="activity regulation">
    <text evidence="7">Regulated by guanine nucleotide exchange factors (GEFs) which promote the exchange of bound GDP for free GTP. Regulated by GTPase activating proteins (GAPs) which increase the GTP hydrolysis activity. Inhibited by GDP dissociation inhibitors (GDIs).</text>
</comment>
<comment type="subunit">
    <text evidence="3 4">Interacts with RAB11FIP1, RABEP1, ZFYVE20 and RUFY1. Interacts with SGSM1, SGSM2 and SGSM3. Interacts (membrane-bound form) with NDRG1; the interaction involves NDRG1 in vesicular recycling of E-cadherin. Interacts (in GTP-bound form) with GRIPAP1. Interacts with RABEP1 and RBSN (By similarity). Does not interact with HPS4 (By similarity).</text>
</comment>
<comment type="subcellular location">
    <subcellularLocation>
        <location evidence="3">Membrane</location>
        <topology evidence="3">Peripheral membrane protein</topology>
    </subcellularLocation>
    <subcellularLocation>
        <location evidence="3">Cytoplasm</location>
    </subcellularLocation>
    <subcellularLocation>
        <location evidence="2">Early endosome membrane</location>
        <topology evidence="2">Peripheral membrane protein</topology>
    </subcellularLocation>
    <subcellularLocation>
        <location evidence="2">Recycling endosome membrane</location>
        <topology evidence="2">Peripheral membrane protein</topology>
    </subcellularLocation>
    <text evidence="3">Generally associated with membranes. Cytoplasmic when phosphorylated by CDK1.</text>
</comment>
<comment type="domain">
    <text evidence="6">Switch 1, switch 2 and the interswitch regions are characteristic of Rab GTPases and mediate the interactions with Rab downstream effectors. The switch regions undergo conformational changes upon nucleotide binding which drives interaction with specific sets of effector proteins, with most effectors only binding to GTP-bound Rab.</text>
</comment>
<comment type="PTM">
    <text evidence="4">Serotonylation of Gln-72 by TGM2 during activation and aggregation of platelets leads to constitutive activation of GTPase activity.</text>
</comment>
<comment type="PTM">
    <text evidence="3">Phosphorylated by CDK1 kinase during mitosis.</text>
</comment>
<comment type="similarity">
    <text evidence="7">Belongs to the small GTPase superfamily. Rab family.</text>
</comment>
<comment type="caution">
    <text evidence="7">It is uncertain whether Met-1 or Met-6 is the initiator.</text>
</comment>
<proteinExistence type="evidence at transcript level"/>
<accession>Q2TBH7</accession>